<organism>
    <name type="scientific">Yersinia pseudotuberculosis serotype O:3 (strain YPIII)</name>
    <dbReference type="NCBI Taxonomy" id="502800"/>
    <lineage>
        <taxon>Bacteria</taxon>
        <taxon>Pseudomonadati</taxon>
        <taxon>Pseudomonadota</taxon>
        <taxon>Gammaproteobacteria</taxon>
        <taxon>Enterobacterales</taxon>
        <taxon>Yersiniaceae</taxon>
        <taxon>Yersinia</taxon>
    </lineage>
</organism>
<proteinExistence type="inferred from homology"/>
<reference key="1">
    <citation type="submission" date="2008-02" db="EMBL/GenBank/DDBJ databases">
        <title>Complete sequence of Yersinia pseudotuberculosis YPIII.</title>
        <authorList>
            <consortium name="US DOE Joint Genome Institute"/>
            <person name="Copeland A."/>
            <person name="Lucas S."/>
            <person name="Lapidus A."/>
            <person name="Glavina del Rio T."/>
            <person name="Dalin E."/>
            <person name="Tice H."/>
            <person name="Bruce D."/>
            <person name="Goodwin L."/>
            <person name="Pitluck S."/>
            <person name="Munk A.C."/>
            <person name="Brettin T."/>
            <person name="Detter J.C."/>
            <person name="Han C."/>
            <person name="Tapia R."/>
            <person name="Schmutz J."/>
            <person name="Larimer F."/>
            <person name="Land M."/>
            <person name="Hauser L."/>
            <person name="Challacombe J.F."/>
            <person name="Green L."/>
            <person name="Lindler L.E."/>
            <person name="Nikolich M.P."/>
            <person name="Richardson P."/>
        </authorList>
    </citation>
    <scope>NUCLEOTIDE SEQUENCE [LARGE SCALE GENOMIC DNA]</scope>
    <source>
        <strain>YPIII</strain>
    </source>
</reference>
<evidence type="ECO:0000255" key="1">
    <source>
        <dbReference type="HAMAP-Rule" id="MF_00575"/>
    </source>
</evidence>
<keyword id="KW-0997">Cell inner membrane</keyword>
<keyword id="KW-1003">Cell membrane</keyword>
<keyword id="KW-0378">Hydrolase</keyword>
<keyword id="KW-0441">Lipid A biosynthesis</keyword>
<keyword id="KW-0444">Lipid biosynthesis</keyword>
<keyword id="KW-0443">Lipid metabolism</keyword>
<keyword id="KW-0464">Manganese</keyword>
<keyword id="KW-0472">Membrane</keyword>
<keyword id="KW-0479">Metal-binding</keyword>
<feature type="chain" id="PRO_1000129549" description="UDP-2,3-diacylglucosamine hydrolase">
    <location>
        <begin position="1"/>
        <end position="240"/>
    </location>
</feature>
<feature type="binding site" evidence="1">
    <location>
        <position position="8"/>
    </location>
    <ligand>
        <name>Mn(2+)</name>
        <dbReference type="ChEBI" id="CHEBI:29035"/>
        <label>1</label>
    </ligand>
</feature>
<feature type="binding site" evidence="1">
    <location>
        <position position="10"/>
    </location>
    <ligand>
        <name>Mn(2+)</name>
        <dbReference type="ChEBI" id="CHEBI:29035"/>
        <label>1</label>
    </ligand>
</feature>
<feature type="binding site" evidence="1">
    <location>
        <position position="41"/>
    </location>
    <ligand>
        <name>Mn(2+)</name>
        <dbReference type="ChEBI" id="CHEBI:29035"/>
        <label>1</label>
    </ligand>
</feature>
<feature type="binding site" evidence="1">
    <location>
        <position position="41"/>
    </location>
    <ligand>
        <name>Mn(2+)</name>
        <dbReference type="ChEBI" id="CHEBI:29035"/>
        <label>2</label>
    </ligand>
</feature>
<feature type="binding site" evidence="1">
    <location>
        <begin position="79"/>
        <end position="80"/>
    </location>
    <ligand>
        <name>substrate</name>
    </ligand>
</feature>
<feature type="binding site" evidence="1">
    <location>
        <position position="79"/>
    </location>
    <ligand>
        <name>Mn(2+)</name>
        <dbReference type="ChEBI" id="CHEBI:29035"/>
        <label>2</label>
    </ligand>
</feature>
<feature type="binding site" evidence="1">
    <location>
        <position position="114"/>
    </location>
    <ligand>
        <name>Mn(2+)</name>
        <dbReference type="ChEBI" id="CHEBI:29035"/>
        <label>2</label>
    </ligand>
</feature>
<feature type="binding site" evidence="1">
    <location>
        <position position="122"/>
    </location>
    <ligand>
        <name>substrate</name>
    </ligand>
</feature>
<feature type="binding site" evidence="1">
    <location>
        <position position="160"/>
    </location>
    <ligand>
        <name>substrate</name>
    </ligand>
</feature>
<feature type="binding site" evidence="1">
    <location>
        <position position="164"/>
    </location>
    <ligand>
        <name>substrate</name>
    </ligand>
</feature>
<feature type="binding site" evidence="1">
    <location>
        <position position="167"/>
    </location>
    <ligand>
        <name>substrate</name>
    </ligand>
</feature>
<feature type="binding site" evidence="1">
    <location>
        <position position="195"/>
    </location>
    <ligand>
        <name>Mn(2+)</name>
        <dbReference type="ChEBI" id="CHEBI:29035"/>
        <label>2</label>
    </ligand>
</feature>
<feature type="binding site" evidence="1">
    <location>
        <position position="195"/>
    </location>
    <ligand>
        <name>substrate</name>
    </ligand>
</feature>
<feature type="binding site" evidence="1">
    <location>
        <position position="197"/>
    </location>
    <ligand>
        <name>Mn(2+)</name>
        <dbReference type="ChEBI" id="CHEBI:29035"/>
        <label>1</label>
    </ligand>
</feature>
<gene>
    <name evidence="1" type="primary">lpxH</name>
    <name type="ordered locus">YPK_3154</name>
</gene>
<sequence>MSTLFIADLHLSVQEPAITAGFLHFIQREAIHADALYILGDLFESWIGDDDPEPLYRQVAAALKSLQQQGVPCYFIHGNRDFLLGKRFAEESGMVLLPEENVVELYGRKILILHGDTLCTDDTDYQHFRKKVHNPLIQKLFLWIPLRLRLRIAAYMRNKSQQNNSGKSERIMDVNSKAVIDAFLRHDVSWMIHGHTHRPAIHSVELPMVTAHRVVLGAWHVEGSMVKVTADNVELITFPF</sequence>
<comment type="function">
    <text evidence="1">Hydrolyzes the pyrophosphate bond of UDP-2,3-diacylglucosamine to yield 2,3-diacylglucosamine 1-phosphate (lipid X) and UMP by catalyzing the attack of water at the alpha-P atom. Involved in the biosynthesis of lipid A, a phosphorylated glycolipid that anchors the lipopolysaccharide to the outer membrane of the cell.</text>
</comment>
<comment type="catalytic activity">
    <reaction evidence="1">
        <text>UDP-2-N,3-O-bis[(3R)-3-hydroxytetradecanoyl]-alpha-D-glucosamine + H2O = 2-N,3-O-bis[(3R)-3-hydroxytetradecanoyl]-alpha-D-glucosaminyl 1-phosphate + UMP + 2 H(+)</text>
        <dbReference type="Rhea" id="RHEA:25213"/>
        <dbReference type="ChEBI" id="CHEBI:15377"/>
        <dbReference type="ChEBI" id="CHEBI:15378"/>
        <dbReference type="ChEBI" id="CHEBI:57865"/>
        <dbReference type="ChEBI" id="CHEBI:57957"/>
        <dbReference type="ChEBI" id="CHEBI:78847"/>
        <dbReference type="EC" id="3.6.1.54"/>
    </reaction>
</comment>
<comment type="cofactor">
    <cofactor evidence="1">
        <name>Mn(2+)</name>
        <dbReference type="ChEBI" id="CHEBI:29035"/>
    </cofactor>
    <text evidence="1">Binds 2 Mn(2+) ions per subunit in a binuclear metal center.</text>
</comment>
<comment type="pathway">
    <text evidence="1">Glycolipid biosynthesis; lipid IV(A) biosynthesis; lipid IV(A) from (3R)-3-hydroxytetradecanoyl-[acyl-carrier-protein] and UDP-N-acetyl-alpha-D-glucosamine: step 4/6.</text>
</comment>
<comment type="subcellular location">
    <subcellularLocation>
        <location evidence="1">Cell inner membrane</location>
        <topology evidence="1">Peripheral membrane protein</topology>
        <orientation evidence="1">Cytoplasmic side</orientation>
    </subcellularLocation>
</comment>
<comment type="similarity">
    <text evidence="1">Belongs to the LpxH family.</text>
</comment>
<dbReference type="EC" id="3.6.1.54" evidence="1"/>
<dbReference type="EMBL" id="CP000950">
    <property type="protein sequence ID" value="ACA69425.1"/>
    <property type="molecule type" value="Genomic_DNA"/>
</dbReference>
<dbReference type="RefSeq" id="WP_002208568.1">
    <property type="nucleotide sequence ID" value="NZ_CP009792.1"/>
</dbReference>
<dbReference type="SMR" id="B1JHJ3"/>
<dbReference type="KEGG" id="ypy:YPK_3154"/>
<dbReference type="PATRIC" id="fig|502800.11.peg.3881"/>
<dbReference type="UniPathway" id="UPA00359">
    <property type="reaction ID" value="UER00480"/>
</dbReference>
<dbReference type="GO" id="GO:0005737">
    <property type="term" value="C:cytoplasm"/>
    <property type="evidence" value="ECO:0007669"/>
    <property type="project" value="InterPro"/>
</dbReference>
<dbReference type="GO" id="GO:0019897">
    <property type="term" value="C:extrinsic component of plasma membrane"/>
    <property type="evidence" value="ECO:0007669"/>
    <property type="project" value="UniProtKB-UniRule"/>
</dbReference>
<dbReference type="GO" id="GO:0030145">
    <property type="term" value="F:manganese ion binding"/>
    <property type="evidence" value="ECO:0007669"/>
    <property type="project" value="UniProtKB-UniRule"/>
</dbReference>
<dbReference type="GO" id="GO:0008758">
    <property type="term" value="F:UDP-2,3-diacylglucosamine hydrolase activity"/>
    <property type="evidence" value="ECO:0007669"/>
    <property type="project" value="UniProtKB-UniRule"/>
</dbReference>
<dbReference type="GO" id="GO:0009245">
    <property type="term" value="P:lipid A biosynthetic process"/>
    <property type="evidence" value="ECO:0007669"/>
    <property type="project" value="UniProtKB-UniRule"/>
</dbReference>
<dbReference type="CDD" id="cd07398">
    <property type="entry name" value="MPP_YbbF-LpxH"/>
    <property type="match status" value="1"/>
</dbReference>
<dbReference type="FunFam" id="3.60.21.10:FF:000074">
    <property type="entry name" value="UDP-2,3-diacylglucosamine hydrolase"/>
    <property type="match status" value="1"/>
</dbReference>
<dbReference type="Gene3D" id="3.60.21.10">
    <property type="match status" value="1"/>
</dbReference>
<dbReference type="HAMAP" id="MF_00575">
    <property type="entry name" value="LpxH"/>
    <property type="match status" value="1"/>
</dbReference>
<dbReference type="InterPro" id="IPR004843">
    <property type="entry name" value="Calcineurin-like_PHP_ApaH"/>
</dbReference>
<dbReference type="InterPro" id="IPR043461">
    <property type="entry name" value="LpxH-like"/>
</dbReference>
<dbReference type="InterPro" id="IPR029052">
    <property type="entry name" value="Metallo-depent_PP-like"/>
</dbReference>
<dbReference type="InterPro" id="IPR010138">
    <property type="entry name" value="UDP-diacylglucosamine_Hdrlase"/>
</dbReference>
<dbReference type="NCBIfam" id="TIGR01854">
    <property type="entry name" value="lipid_A_lpxH"/>
    <property type="match status" value="1"/>
</dbReference>
<dbReference type="NCBIfam" id="NF003743">
    <property type="entry name" value="PRK05340.1"/>
    <property type="match status" value="1"/>
</dbReference>
<dbReference type="PANTHER" id="PTHR34990:SF1">
    <property type="entry name" value="UDP-2,3-DIACYLGLUCOSAMINE HYDROLASE"/>
    <property type="match status" value="1"/>
</dbReference>
<dbReference type="PANTHER" id="PTHR34990">
    <property type="entry name" value="UDP-2,3-DIACYLGLUCOSAMINE HYDROLASE-RELATED"/>
    <property type="match status" value="1"/>
</dbReference>
<dbReference type="Pfam" id="PF00149">
    <property type="entry name" value="Metallophos"/>
    <property type="match status" value="1"/>
</dbReference>
<dbReference type="SUPFAM" id="SSF56300">
    <property type="entry name" value="Metallo-dependent phosphatases"/>
    <property type="match status" value="1"/>
</dbReference>
<protein>
    <recommendedName>
        <fullName evidence="1">UDP-2,3-diacylglucosamine hydrolase</fullName>
        <ecNumber evidence="1">3.6.1.54</ecNumber>
    </recommendedName>
    <alternativeName>
        <fullName evidence="1">UDP-2,3-diacylglucosamine diphosphatase</fullName>
    </alternativeName>
</protein>
<accession>B1JHJ3</accession>
<name>LPXH_YERPY</name>